<evidence type="ECO:0000255" key="1">
    <source>
        <dbReference type="HAMAP-Rule" id="MF_00252"/>
    </source>
</evidence>
<feature type="chain" id="PRO_1000012857" description="Lysine--tRNA ligase">
    <location>
        <begin position="1"/>
        <end position="508"/>
    </location>
</feature>
<feature type="binding site" evidence="1">
    <location>
        <position position="418"/>
    </location>
    <ligand>
        <name>Mg(2+)</name>
        <dbReference type="ChEBI" id="CHEBI:18420"/>
        <label>1</label>
    </ligand>
</feature>
<feature type="binding site" evidence="1">
    <location>
        <position position="425"/>
    </location>
    <ligand>
        <name>Mg(2+)</name>
        <dbReference type="ChEBI" id="CHEBI:18420"/>
        <label>1</label>
    </ligand>
</feature>
<feature type="binding site" evidence="1">
    <location>
        <position position="425"/>
    </location>
    <ligand>
        <name>Mg(2+)</name>
        <dbReference type="ChEBI" id="CHEBI:18420"/>
        <label>2</label>
    </ligand>
</feature>
<reference key="1">
    <citation type="journal article" date="2010" name="Genome Biol. Evol.">
        <title>Continuing evolution of Burkholderia mallei through genome reduction and large-scale rearrangements.</title>
        <authorList>
            <person name="Losada L."/>
            <person name="Ronning C.M."/>
            <person name="DeShazer D."/>
            <person name="Woods D."/>
            <person name="Fedorova N."/>
            <person name="Kim H.S."/>
            <person name="Shabalina S.A."/>
            <person name="Pearson T.R."/>
            <person name="Brinkac L."/>
            <person name="Tan P."/>
            <person name="Nandi T."/>
            <person name="Crabtree J."/>
            <person name="Badger J."/>
            <person name="Beckstrom-Sternberg S."/>
            <person name="Saqib M."/>
            <person name="Schutzer S.E."/>
            <person name="Keim P."/>
            <person name="Nierman W.C."/>
        </authorList>
    </citation>
    <scope>NUCLEOTIDE SEQUENCE [LARGE SCALE GENOMIC DNA]</scope>
    <source>
        <strain>668</strain>
    </source>
</reference>
<proteinExistence type="inferred from homology"/>
<name>SYK_BURP6</name>
<organism>
    <name type="scientific">Burkholderia pseudomallei (strain 668)</name>
    <dbReference type="NCBI Taxonomy" id="320373"/>
    <lineage>
        <taxon>Bacteria</taxon>
        <taxon>Pseudomonadati</taxon>
        <taxon>Pseudomonadota</taxon>
        <taxon>Betaproteobacteria</taxon>
        <taxon>Burkholderiales</taxon>
        <taxon>Burkholderiaceae</taxon>
        <taxon>Burkholderia</taxon>
        <taxon>pseudomallei group</taxon>
    </lineage>
</organism>
<sequence length="508" mass="57188">MTEPTQPQAAVAADENQIVAERRDKLRALRDQGIAYPNDFQPTHHAAGLQTEYADADKEALDAKALDVAVAGRMMLKRVMGKASFATVQDGSGQIQFFVTPADVGAETYDAFKKWDLGDIVAARGVLFRTNKGELSVKCTELRLLAKALRPLPDKFHGLADQETRYRQRYVDLIVTPETRATFRARTKAIASIRKFMSDADFMEVETPMLHPIPGGAAAKPFVTHHNALDMQMFLRIAPELYLKRLIVGGFERVFEINRNFRNEGVSPRHNPEFTMMEFYAAYTDYRWLMDFTERLIRQAAVDALGTATIRYQGRELDLAKPFHRLTITQAIQKYAPNYTDGQLSDDAFLRGELKRLGVDVTQPAFLNAGIGALQLALFEETAEAQLWEPTFIVDYPIEVSPLARESDTVAGITERFELFVTGREIANGFSELNDPEDQAARFRKQVEQKDAGDEEAMFFDADYIRALEYGMPPTGGCGIGIDRLVMLLTDSPTIRDVLLFPHLRRED</sequence>
<accession>A3NB96</accession>
<protein>
    <recommendedName>
        <fullName evidence="1">Lysine--tRNA ligase</fullName>
        <ecNumber evidence="1">6.1.1.6</ecNumber>
    </recommendedName>
    <alternativeName>
        <fullName evidence="1">Lysyl-tRNA synthetase</fullName>
        <shortName evidence="1">LysRS</shortName>
    </alternativeName>
</protein>
<dbReference type="EC" id="6.1.1.6" evidence="1"/>
<dbReference type="EMBL" id="CP000570">
    <property type="protein sequence ID" value="ABN84809.1"/>
    <property type="molecule type" value="Genomic_DNA"/>
</dbReference>
<dbReference type="RefSeq" id="WP_011851891.1">
    <property type="nucleotide sequence ID" value="NC_009074.1"/>
</dbReference>
<dbReference type="SMR" id="A3NB96"/>
<dbReference type="KEGG" id="bpd:BURPS668_2591"/>
<dbReference type="HOGENOM" id="CLU_008255_6_0_4"/>
<dbReference type="GO" id="GO:0005829">
    <property type="term" value="C:cytosol"/>
    <property type="evidence" value="ECO:0007669"/>
    <property type="project" value="TreeGrafter"/>
</dbReference>
<dbReference type="GO" id="GO:0005524">
    <property type="term" value="F:ATP binding"/>
    <property type="evidence" value="ECO:0007669"/>
    <property type="project" value="UniProtKB-UniRule"/>
</dbReference>
<dbReference type="GO" id="GO:0004824">
    <property type="term" value="F:lysine-tRNA ligase activity"/>
    <property type="evidence" value="ECO:0007669"/>
    <property type="project" value="UniProtKB-UniRule"/>
</dbReference>
<dbReference type="GO" id="GO:0000287">
    <property type="term" value="F:magnesium ion binding"/>
    <property type="evidence" value="ECO:0007669"/>
    <property type="project" value="UniProtKB-UniRule"/>
</dbReference>
<dbReference type="GO" id="GO:0000049">
    <property type="term" value="F:tRNA binding"/>
    <property type="evidence" value="ECO:0007669"/>
    <property type="project" value="TreeGrafter"/>
</dbReference>
<dbReference type="GO" id="GO:0006430">
    <property type="term" value="P:lysyl-tRNA aminoacylation"/>
    <property type="evidence" value="ECO:0007669"/>
    <property type="project" value="UniProtKB-UniRule"/>
</dbReference>
<dbReference type="CDD" id="cd00775">
    <property type="entry name" value="LysRS_core"/>
    <property type="match status" value="1"/>
</dbReference>
<dbReference type="CDD" id="cd04322">
    <property type="entry name" value="LysRS_N"/>
    <property type="match status" value="1"/>
</dbReference>
<dbReference type="FunFam" id="2.40.50.140:FF:000024">
    <property type="entry name" value="Lysine--tRNA ligase"/>
    <property type="match status" value="1"/>
</dbReference>
<dbReference type="FunFam" id="3.30.930.10:FF:000001">
    <property type="entry name" value="Lysine--tRNA ligase"/>
    <property type="match status" value="1"/>
</dbReference>
<dbReference type="Gene3D" id="3.30.930.10">
    <property type="entry name" value="Bira Bifunctional Protein, Domain 2"/>
    <property type="match status" value="1"/>
</dbReference>
<dbReference type="Gene3D" id="2.40.50.140">
    <property type="entry name" value="Nucleic acid-binding proteins"/>
    <property type="match status" value="1"/>
</dbReference>
<dbReference type="HAMAP" id="MF_00252">
    <property type="entry name" value="Lys_tRNA_synth_class2"/>
    <property type="match status" value="1"/>
</dbReference>
<dbReference type="InterPro" id="IPR004364">
    <property type="entry name" value="Aa-tRNA-synt_II"/>
</dbReference>
<dbReference type="InterPro" id="IPR006195">
    <property type="entry name" value="aa-tRNA-synth_II"/>
</dbReference>
<dbReference type="InterPro" id="IPR045864">
    <property type="entry name" value="aa-tRNA-synth_II/BPL/LPL"/>
</dbReference>
<dbReference type="InterPro" id="IPR002313">
    <property type="entry name" value="Lys-tRNA-ligase_II"/>
</dbReference>
<dbReference type="InterPro" id="IPR044136">
    <property type="entry name" value="Lys-tRNA-ligase_II_N"/>
</dbReference>
<dbReference type="InterPro" id="IPR018149">
    <property type="entry name" value="Lys-tRNA-synth_II_C"/>
</dbReference>
<dbReference type="InterPro" id="IPR012340">
    <property type="entry name" value="NA-bd_OB-fold"/>
</dbReference>
<dbReference type="InterPro" id="IPR004365">
    <property type="entry name" value="NA-bd_OB_tRNA"/>
</dbReference>
<dbReference type="NCBIfam" id="TIGR00499">
    <property type="entry name" value="lysS_bact"/>
    <property type="match status" value="1"/>
</dbReference>
<dbReference type="NCBIfam" id="NF001756">
    <property type="entry name" value="PRK00484.1"/>
    <property type="match status" value="1"/>
</dbReference>
<dbReference type="PANTHER" id="PTHR42918:SF15">
    <property type="entry name" value="LYSINE--TRNA LIGASE, CHLOROPLASTIC_MITOCHONDRIAL"/>
    <property type="match status" value="1"/>
</dbReference>
<dbReference type="PANTHER" id="PTHR42918">
    <property type="entry name" value="LYSYL-TRNA SYNTHETASE"/>
    <property type="match status" value="1"/>
</dbReference>
<dbReference type="Pfam" id="PF00152">
    <property type="entry name" value="tRNA-synt_2"/>
    <property type="match status" value="1"/>
</dbReference>
<dbReference type="Pfam" id="PF01336">
    <property type="entry name" value="tRNA_anti-codon"/>
    <property type="match status" value="1"/>
</dbReference>
<dbReference type="PRINTS" id="PR00982">
    <property type="entry name" value="TRNASYNTHLYS"/>
</dbReference>
<dbReference type="SUPFAM" id="SSF55681">
    <property type="entry name" value="Class II aaRS and biotin synthetases"/>
    <property type="match status" value="1"/>
</dbReference>
<dbReference type="SUPFAM" id="SSF50249">
    <property type="entry name" value="Nucleic acid-binding proteins"/>
    <property type="match status" value="1"/>
</dbReference>
<dbReference type="PROSITE" id="PS50862">
    <property type="entry name" value="AA_TRNA_LIGASE_II"/>
    <property type="match status" value="1"/>
</dbReference>
<comment type="catalytic activity">
    <reaction evidence="1">
        <text>tRNA(Lys) + L-lysine + ATP = L-lysyl-tRNA(Lys) + AMP + diphosphate</text>
        <dbReference type="Rhea" id="RHEA:20792"/>
        <dbReference type="Rhea" id="RHEA-COMP:9696"/>
        <dbReference type="Rhea" id="RHEA-COMP:9697"/>
        <dbReference type="ChEBI" id="CHEBI:30616"/>
        <dbReference type="ChEBI" id="CHEBI:32551"/>
        <dbReference type="ChEBI" id="CHEBI:33019"/>
        <dbReference type="ChEBI" id="CHEBI:78442"/>
        <dbReference type="ChEBI" id="CHEBI:78529"/>
        <dbReference type="ChEBI" id="CHEBI:456215"/>
        <dbReference type="EC" id="6.1.1.6"/>
    </reaction>
</comment>
<comment type="cofactor">
    <cofactor evidence="1">
        <name>Mg(2+)</name>
        <dbReference type="ChEBI" id="CHEBI:18420"/>
    </cofactor>
    <text evidence="1">Binds 3 Mg(2+) ions per subunit.</text>
</comment>
<comment type="subunit">
    <text evidence="1">Homodimer.</text>
</comment>
<comment type="subcellular location">
    <subcellularLocation>
        <location evidence="1">Cytoplasm</location>
    </subcellularLocation>
</comment>
<comment type="similarity">
    <text evidence="1">Belongs to the class-II aminoacyl-tRNA synthetase family.</text>
</comment>
<gene>
    <name evidence="1" type="primary">lysS</name>
    <name type="ordered locus">BURPS668_2591</name>
</gene>
<keyword id="KW-0030">Aminoacyl-tRNA synthetase</keyword>
<keyword id="KW-0067">ATP-binding</keyword>
<keyword id="KW-0963">Cytoplasm</keyword>
<keyword id="KW-0436">Ligase</keyword>
<keyword id="KW-0460">Magnesium</keyword>
<keyword id="KW-0479">Metal-binding</keyword>
<keyword id="KW-0547">Nucleotide-binding</keyword>
<keyword id="KW-0648">Protein biosynthesis</keyword>